<name>TPBG_HUMAN</name>
<proteinExistence type="evidence at protein level"/>
<accession>Q13641</accession>
<accession>A8K555</accession>
<gene>
    <name type="primary">TPBG</name>
    <name type="synonym">5T4</name>
</gene>
<organism>
    <name type="scientific">Homo sapiens</name>
    <name type="common">Human</name>
    <dbReference type="NCBI Taxonomy" id="9606"/>
    <lineage>
        <taxon>Eukaryota</taxon>
        <taxon>Metazoa</taxon>
        <taxon>Chordata</taxon>
        <taxon>Craniata</taxon>
        <taxon>Vertebrata</taxon>
        <taxon>Euteleostomi</taxon>
        <taxon>Mammalia</taxon>
        <taxon>Eutheria</taxon>
        <taxon>Euarchontoglires</taxon>
        <taxon>Primates</taxon>
        <taxon>Haplorrhini</taxon>
        <taxon>Catarrhini</taxon>
        <taxon>Hominidae</taxon>
        <taxon>Homo</taxon>
    </lineage>
</organism>
<sequence length="420" mass="46032">MPGGCSRGPAAGDGRLRLARLALVLLGWVSSSSPTSSASSFSSSAPFLASAVSAQPPLPDQCPALCECSEAARTVKCVNRNLTEVPTDLPAYVRNLFLTGNQLAVLPAGAFARRPPLAELAALNLSGSRLDEVRAGAFEHLPSLRQLDLSHNPLADLSPFAFSGSNASVSAPSPLVELILNHIVPPEDERQNRSFEGMVVAALLAGRALQGLRRLELASNHFLYLPRDVLAQLPSLRHLDLSNNSLVSLTYVSFRNLTHLESLHLEDNALKVLHNGTLAELQGLPHIRVFLDNNPWVCDCHMADMVTWLKETEVVQGKDRLTCAYPEKMRNRVLLELNSADLDCDPILPPSLQTSYVFLGIVLALIGAIFLLVLYLNRKGIKKWMHNIRDACRDHMEGYHYRYEINADPRLTNLSSNSDV</sequence>
<feature type="signal peptide" evidence="2">
    <location>
        <begin position="1"/>
        <end position="31"/>
    </location>
</feature>
<feature type="chain" id="PRO_0000019591" description="Trophoblast glycoprotein">
    <location>
        <begin position="32"/>
        <end position="420"/>
    </location>
</feature>
<feature type="topological domain" description="Extracellular" evidence="2">
    <location>
        <begin position="32"/>
        <end position="355"/>
    </location>
</feature>
<feature type="transmembrane region" description="Helical" evidence="2">
    <location>
        <begin position="356"/>
        <end position="376"/>
    </location>
</feature>
<feature type="topological domain" description="Cytoplasmic" evidence="2">
    <location>
        <begin position="377"/>
        <end position="420"/>
    </location>
</feature>
<feature type="domain" description="LRRNT">
    <location>
        <begin position="53"/>
        <end position="91"/>
    </location>
</feature>
<feature type="repeat" description="LRR 1" evidence="5">
    <location>
        <begin position="92"/>
        <end position="113"/>
    </location>
</feature>
<feature type="repeat" description="LRR 2" evidence="5">
    <location>
        <begin position="116"/>
        <end position="139"/>
    </location>
</feature>
<feature type="repeat" description="LRR 3" evidence="5">
    <location>
        <begin position="141"/>
        <end position="163"/>
    </location>
</feature>
<feature type="repeat" description="LRR 4" evidence="5">
    <location>
        <begin position="172"/>
        <end position="204"/>
    </location>
</feature>
<feature type="repeat" description="LRR 5" evidence="5">
    <location>
        <begin position="209"/>
        <end position="232"/>
    </location>
</feature>
<feature type="repeat" description="LRR 6" evidence="5">
    <location>
        <begin position="233"/>
        <end position="255"/>
    </location>
</feature>
<feature type="repeat" description="LRR 7" evidence="5">
    <location>
        <begin position="256"/>
        <end position="275"/>
    </location>
</feature>
<feature type="domain" description="LRRCT">
    <location>
        <begin position="283"/>
        <end position="346"/>
    </location>
</feature>
<feature type="modified residue" description="Phosphoserine" evidence="1">
    <location>
        <position position="418"/>
    </location>
</feature>
<feature type="glycosylation site" description="N-linked (GlcNAc...) asparagine" evidence="2">
    <location>
        <position position="81"/>
    </location>
</feature>
<feature type="glycosylation site" description="N-linked (GlcNAc...) asparagine" evidence="3">
    <location>
        <position position="124"/>
    </location>
</feature>
<feature type="glycosylation site" description="N-linked (GlcNAc...) asparagine" evidence="2">
    <location>
        <position position="275"/>
    </location>
</feature>
<feature type="disulfide bond" evidence="5">
    <location>
        <begin position="62"/>
        <end position="68"/>
    </location>
</feature>
<feature type="disulfide bond" evidence="5">
    <location>
        <begin position="66"/>
        <end position="77"/>
    </location>
</feature>
<feature type="disulfide bond" evidence="5">
    <location>
        <begin position="298"/>
        <end position="323"/>
    </location>
</feature>
<feature type="disulfide bond" evidence="5">
    <location>
        <begin position="300"/>
        <end position="344"/>
    </location>
</feature>
<feature type="mutagenesis site" description="Strongly reduces Wnt inhibitory function." evidence="5">
    <original>K</original>
    <variation>A</variation>
    <location>
        <position position="76"/>
    </location>
</feature>
<feature type="mutagenesis site" description="Strongly reduces Wnt inhibitory function." evidence="5">
    <original>F</original>
    <variation>T</variation>
    <location>
        <position position="97"/>
    </location>
</feature>
<feature type="mutagenesis site" description="Impaired trafficking to the cell surface." evidence="5">
    <original>N</original>
    <variation>Q</variation>
    <location>
        <position position="124"/>
    </location>
</feature>
<feature type="mutagenesis site" description="Impaired trafficking to the cell surface." evidence="5">
    <original>R</original>
    <variation>E</variation>
    <location>
        <position position="214"/>
    </location>
</feature>
<feature type="mutagenesis site" description="Reduces Wnt inhibitory function." evidence="5">
    <original>Y</original>
    <variation>A</variation>
    <location>
        <position position="325"/>
    </location>
</feature>
<feature type="strand" evidence="7">
    <location>
        <begin position="67"/>
        <end position="69"/>
    </location>
</feature>
<feature type="turn" evidence="7">
    <location>
        <begin position="70"/>
        <end position="73"/>
    </location>
</feature>
<feature type="strand" evidence="7">
    <location>
        <begin position="74"/>
        <end position="76"/>
    </location>
</feature>
<feature type="strand" evidence="7">
    <location>
        <begin position="94"/>
        <end position="97"/>
    </location>
</feature>
<feature type="strand" evidence="7">
    <location>
        <begin position="104"/>
        <end position="106"/>
    </location>
</feature>
<feature type="turn" evidence="7">
    <location>
        <begin position="108"/>
        <end position="111"/>
    </location>
</feature>
<feature type="strand" evidence="7">
    <location>
        <begin position="122"/>
        <end position="124"/>
    </location>
</feature>
<feature type="strand" evidence="7">
    <location>
        <begin position="130"/>
        <end position="133"/>
    </location>
</feature>
<feature type="turn" evidence="7">
    <location>
        <begin position="135"/>
        <end position="140"/>
    </location>
</feature>
<feature type="strand" evidence="7">
    <location>
        <begin position="146"/>
        <end position="148"/>
    </location>
</feature>
<feature type="strand" evidence="7">
    <location>
        <begin position="155"/>
        <end position="157"/>
    </location>
</feature>
<feature type="turn" evidence="7">
    <location>
        <begin position="159"/>
        <end position="163"/>
    </location>
</feature>
<feature type="turn" evidence="6">
    <location>
        <begin position="164"/>
        <end position="166"/>
    </location>
</feature>
<feature type="strand" evidence="7">
    <location>
        <begin position="177"/>
        <end position="179"/>
    </location>
</feature>
<feature type="helix" evidence="7">
    <location>
        <begin position="188"/>
        <end position="190"/>
    </location>
</feature>
<feature type="strand" evidence="7">
    <location>
        <begin position="191"/>
        <end position="193"/>
    </location>
</feature>
<feature type="helix" evidence="7">
    <location>
        <begin position="195"/>
        <end position="204"/>
    </location>
</feature>
<feature type="helix" evidence="7">
    <location>
        <begin position="205"/>
        <end position="207"/>
    </location>
</feature>
<feature type="turn" evidence="7">
    <location>
        <begin position="208"/>
        <end position="211"/>
    </location>
</feature>
<feature type="strand" evidence="7">
    <location>
        <begin position="214"/>
        <end position="216"/>
    </location>
</feature>
<feature type="helix" evidence="7">
    <location>
        <begin position="227"/>
        <end position="232"/>
    </location>
</feature>
<feature type="strand" evidence="7">
    <location>
        <begin position="238"/>
        <end position="240"/>
    </location>
</feature>
<feature type="strand" evidence="7">
    <location>
        <begin position="262"/>
        <end position="264"/>
    </location>
</feature>
<feature type="helix" evidence="7">
    <location>
        <begin position="275"/>
        <end position="281"/>
    </location>
</feature>
<feature type="strand" evidence="7">
    <location>
        <begin position="288"/>
        <end position="290"/>
    </location>
</feature>
<feature type="helix" evidence="7">
    <location>
        <begin position="300"/>
        <end position="302"/>
    </location>
</feature>
<feature type="helix" evidence="7">
    <location>
        <begin position="303"/>
        <end position="311"/>
    </location>
</feature>
<feature type="strand" evidence="7">
    <location>
        <begin position="313"/>
        <end position="316"/>
    </location>
</feature>
<feature type="helix" evidence="7">
    <location>
        <begin position="318"/>
        <end position="320"/>
    </location>
</feature>
<feature type="strand" evidence="7">
    <location>
        <begin position="322"/>
        <end position="326"/>
    </location>
</feature>
<feature type="helix" evidence="7">
    <location>
        <begin position="327"/>
        <end position="329"/>
    </location>
</feature>
<feature type="helix" evidence="7">
    <location>
        <begin position="334"/>
        <end position="336"/>
    </location>
</feature>
<feature type="helix" evidence="7">
    <location>
        <begin position="339"/>
        <end position="341"/>
    </location>
</feature>
<dbReference type="EMBL" id="Z29083">
    <property type="protein sequence ID" value="CAA82324.1"/>
    <property type="molecule type" value="mRNA"/>
</dbReference>
<dbReference type="EMBL" id="AK291170">
    <property type="protein sequence ID" value="BAF83859.1"/>
    <property type="molecule type" value="mRNA"/>
</dbReference>
<dbReference type="EMBL" id="AK074790">
    <property type="protein sequence ID" value="BAG52001.1"/>
    <property type="molecule type" value="mRNA"/>
</dbReference>
<dbReference type="EMBL" id="CH471051">
    <property type="protein sequence ID" value="EAW48683.1"/>
    <property type="molecule type" value="Genomic_DNA"/>
</dbReference>
<dbReference type="EMBL" id="AL121977">
    <property type="status" value="NOT_ANNOTATED_CDS"/>
    <property type="molecule type" value="Genomic_DNA"/>
</dbReference>
<dbReference type="EMBL" id="AJ012159">
    <property type="protein sequence ID" value="CAA09930.1"/>
    <property type="molecule type" value="Genomic_DNA"/>
</dbReference>
<dbReference type="EMBL" id="BC037161">
    <property type="protein sequence ID" value="AAH37161.1"/>
    <property type="molecule type" value="mRNA"/>
</dbReference>
<dbReference type="CCDS" id="CCDS4995.1"/>
<dbReference type="PIR" id="A53531">
    <property type="entry name" value="A53531"/>
</dbReference>
<dbReference type="RefSeq" id="NP_001159864.1">
    <property type="nucleotide sequence ID" value="NM_001166392.2"/>
</dbReference>
<dbReference type="RefSeq" id="NP_001363851.1">
    <property type="nucleotide sequence ID" value="NM_001376922.1"/>
</dbReference>
<dbReference type="RefSeq" id="NP_006661.1">
    <property type="nucleotide sequence ID" value="NM_006670.5"/>
</dbReference>
<dbReference type="RefSeq" id="XP_011534399.1">
    <property type="nucleotide sequence ID" value="XM_011536097.2"/>
</dbReference>
<dbReference type="PDB" id="4CNC">
    <property type="method" value="X-ray"/>
    <property type="resolution" value="1.77 A"/>
    <property type="chains" value="A/B=60-345"/>
</dbReference>
<dbReference type="PDB" id="4CNM">
    <property type="method" value="X-ray"/>
    <property type="resolution" value="1.75 A"/>
    <property type="chains" value="A=60-345"/>
</dbReference>
<dbReference type="PDB" id="6HBY">
    <property type="method" value="X-ray"/>
    <property type="resolution" value="1.95 A"/>
    <property type="chains" value="C/F=112-130"/>
</dbReference>
<dbReference type="PDBsum" id="4CNC"/>
<dbReference type="PDBsum" id="4CNM"/>
<dbReference type="PDBsum" id="6HBY"/>
<dbReference type="SMR" id="Q13641"/>
<dbReference type="BioGRID" id="113015">
    <property type="interactions" value="41"/>
</dbReference>
<dbReference type="FunCoup" id="Q13641">
    <property type="interactions" value="310"/>
</dbReference>
<dbReference type="IntAct" id="Q13641">
    <property type="interactions" value="7"/>
</dbReference>
<dbReference type="MINT" id="Q13641"/>
<dbReference type="STRING" id="9606.ENSP00000358765"/>
<dbReference type="ChEMBL" id="CHEMBL3712934"/>
<dbReference type="GuidetoPHARMACOLOGY" id="3009"/>
<dbReference type="GlyConnect" id="1860">
    <property type="glycosylation" value="4 N-Linked glycans (2 sites)"/>
</dbReference>
<dbReference type="GlyCosmos" id="Q13641">
    <property type="glycosylation" value="5 sites, 6 glycans"/>
</dbReference>
<dbReference type="GlyGen" id="Q13641">
    <property type="glycosylation" value="10 sites, 19 N-linked glycans (5 sites), 3 O-linked glycans (3 sites)"/>
</dbReference>
<dbReference type="iPTMnet" id="Q13641"/>
<dbReference type="PhosphoSitePlus" id="Q13641"/>
<dbReference type="SwissPalm" id="Q13641"/>
<dbReference type="BioMuta" id="TPBG"/>
<dbReference type="DMDM" id="73621980"/>
<dbReference type="jPOST" id="Q13641"/>
<dbReference type="MassIVE" id="Q13641"/>
<dbReference type="PaxDb" id="9606-ENSP00000358765"/>
<dbReference type="PeptideAtlas" id="Q13641"/>
<dbReference type="ProteomicsDB" id="59641"/>
<dbReference type="Pumba" id="Q13641"/>
<dbReference type="ABCD" id="Q13641">
    <property type="antibodies" value="24 sequenced antibodies"/>
</dbReference>
<dbReference type="Antibodypedia" id="2135">
    <property type="antibodies" value="371 antibodies from 34 providers"/>
</dbReference>
<dbReference type="DNASU" id="7162"/>
<dbReference type="Ensembl" id="ENST00000369750.4">
    <property type="protein sequence ID" value="ENSP00000358765.4"/>
    <property type="gene ID" value="ENSG00000146242.9"/>
</dbReference>
<dbReference type="Ensembl" id="ENST00000535040.4">
    <property type="protein sequence ID" value="ENSP00000441219.1"/>
    <property type="gene ID" value="ENSG00000146242.9"/>
</dbReference>
<dbReference type="Ensembl" id="ENST00000543496.3">
    <property type="protein sequence ID" value="ENSP00000440049.1"/>
    <property type="gene ID" value="ENSG00000146242.9"/>
</dbReference>
<dbReference type="Ensembl" id="ENST00000634817.1">
    <property type="protein sequence ID" value="ENSP00000489447.1"/>
    <property type="gene ID" value="ENSG00000283085.3"/>
</dbReference>
<dbReference type="Ensembl" id="ENST00000634826.1">
    <property type="protein sequence ID" value="ENSP00000489140.1"/>
    <property type="gene ID" value="ENSG00000283085.3"/>
</dbReference>
<dbReference type="Ensembl" id="ENST00000635036.3">
    <property type="protein sequence ID" value="ENSP00000489143.1"/>
    <property type="gene ID" value="ENSG00000283085.3"/>
</dbReference>
<dbReference type="GeneID" id="7162"/>
<dbReference type="KEGG" id="hsa:7162"/>
<dbReference type="MANE-Select" id="ENST00000369750.4">
    <property type="protein sequence ID" value="ENSP00000358765.4"/>
    <property type="RefSeq nucleotide sequence ID" value="NM_001376922.1"/>
    <property type="RefSeq protein sequence ID" value="NP_001363851.1"/>
</dbReference>
<dbReference type="UCSC" id="uc003pjn.5">
    <property type="organism name" value="human"/>
</dbReference>
<dbReference type="AGR" id="HGNC:12004"/>
<dbReference type="CTD" id="7162"/>
<dbReference type="DisGeNET" id="7162"/>
<dbReference type="GeneCards" id="TPBG"/>
<dbReference type="HGNC" id="HGNC:12004">
    <property type="gene designation" value="TPBG"/>
</dbReference>
<dbReference type="HPA" id="ENSG00000146242">
    <property type="expression patterns" value="Low tissue specificity"/>
</dbReference>
<dbReference type="MIM" id="190920">
    <property type="type" value="gene"/>
</dbReference>
<dbReference type="neXtProt" id="NX_Q13641"/>
<dbReference type="OpenTargets" id="ENSG00000146242"/>
<dbReference type="PharmGKB" id="PA36685"/>
<dbReference type="VEuPathDB" id="HostDB:ENSG00000146242"/>
<dbReference type="eggNOG" id="KOG0619">
    <property type="taxonomic scope" value="Eukaryota"/>
</dbReference>
<dbReference type="GeneTree" id="ENSGT00940000154868"/>
<dbReference type="HOGENOM" id="CLU_064866_0_0_1"/>
<dbReference type="InParanoid" id="Q13641"/>
<dbReference type="OMA" id="FVKPSDM"/>
<dbReference type="OrthoDB" id="8861968at2759"/>
<dbReference type="PAN-GO" id="Q13641">
    <property type="GO annotations" value="2 GO annotations based on evolutionary models"/>
</dbReference>
<dbReference type="PhylomeDB" id="Q13641"/>
<dbReference type="TreeFam" id="TF351115"/>
<dbReference type="PathwayCommons" id="Q13641"/>
<dbReference type="SignaLink" id="Q13641"/>
<dbReference type="BioGRID-ORCS" id="7162">
    <property type="hits" value="23 hits in 1143 CRISPR screens"/>
</dbReference>
<dbReference type="EvolutionaryTrace" id="Q13641"/>
<dbReference type="GeneWiki" id="TPBG"/>
<dbReference type="GenomeRNAi" id="7162"/>
<dbReference type="Pharos" id="Q13641">
    <property type="development level" value="Tbio"/>
</dbReference>
<dbReference type="PRO" id="PR:Q13641"/>
<dbReference type="Proteomes" id="UP000005640">
    <property type="component" value="Chromosome 6"/>
</dbReference>
<dbReference type="RNAct" id="Q13641">
    <property type="molecule type" value="protein"/>
</dbReference>
<dbReference type="Bgee" id="ENSG00000146242">
    <property type="expression patterns" value="Expressed in lower esophagus muscularis layer and 97 other cell types or tissues"/>
</dbReference>
<dbReference type="GO" id="GO:0043679">
    <property type="term" value="C:axon terminus"/>
    <property type="evidence" value="ECO:0007669"/>
    <property type="project" value="Ensembl"/>
</dbReference>
<dbReference type="GO" id="GO:0009986">
    <property type="term" value="C:cell surface"/>
    <property type="evidence" value="ECO:0007005"/>
    <property type="project" value="UniProtKB"/>
</dbReference>
<dbReference type="GO" id="GO:0030425">
    <property type="term" value="C:dendrite"/>
    <property type="evidence" value="ECO:0007669"/>
    <property type="project" value="Ensembl"/>
</dbReference>
<dbReference type="GO" id="GO:0005783">
    <property type="term" value="C:endoplasmic reticulum"/>
    <property type="evidence" value="ECO:0007669"/>
    <property type="project" value="Ensembl"/>
</dbReference>
<dbReference type="GO" id="GO:0005886">
    <property type="term" value="C:plasma membrane"/>
    <property type="evidence" value="ECO:0000318"/>
    <property type="project" value="GO_Central"/>
</dbReference>
<dbReference type="GO" id="GO:0007155">
    <property type="term" value="P:cell adhesion"/>
    <property type="evidence" value="ECO:0000303"/>
    <property type="project" value="ProtInc"/>
</dbReference>
<dbReference type="GO" id="GO:0060326">
    <property type="term" value="P:cell chemotaxis"/>
    <property type="evidence" value="ECO:0007669"/>
    <property type="project" value="Ensembl"/>
</dbReference>
<dbReference type="GO" id="GO:0140059">
    <property type="term" value="P:dendrite arborization"/>
    <property type="evidence" value="ECO:0007669"/>
    <property type="project" value="Ensembl"/>
</dbReference>
<dbReference type="GO" id="GO:0090497">
    <property type="term" value="P:mesenchymal cell migration"/>
    <property type="evidence" value="ECO:0007669"/>
    <property type="project" value="Ensembl"/>
</dbReference>
<dbReference type="GO" id="GO:0090090">
    <property type="term" value="P:negative regulation of canonical Wnt signaling pathway"/>
    <property type="evidence" value="ECO:0000318"/>
    <property type="project" value="GO_Central"/>
</dbReference>
<dbReference type="GO" id="GO:0008285">
    <property type="term" value="P:negative regulation of cell population proliferation"/>
    <property type="evidence" value="ECO:0007669"/>
    <property type="project" value="Ensembl"/>
</dbReference>
<dbReference type="GO" id="GO:0008355">
    <property type="term" value="P:olfactory learning"/>
    <property type="evidence" value="ECO:0007669"/>
    <property type="project" value="Ensembl"/>
</dbReference>
<dbReference type="GO" id="GO:0050921">
    <property type="term" value="P:positive regulation of chemotaxis"/>
    <property type="evidence" value="ECO:0007669"/>
    <property type="project" value="Ensembl"/>
</dbReference>
<dbReference type="GO" id="GO:0070374">
    <property type="term" value="P:positive regulation of ERK1 and ERK2 cascade"/>
    <property type="evidence" value="ECO:0007669"/>
    <property type="project" value="Ensembl"/>
</dbReference>
<dbReference type="GO" id="GO:0051897">
    <property type="term" value="P:positive regulation of phosphatidylinositol 3-kinase/protein kinase B signal transduction"/>
    <property type="evidence" value="ECO:0007669"/>
    <property type="project" value="Ensembl"/>
</dbReference>
<dbReference type="GO" id="GO:0051965">
    <property type="term" value="P:positive regulation of synapse assembly"/>
    <property type="evidence" value="ECO:0007669"/>
    <property type="project" value="Ensembl"/>
</dbReference>
<dbReference type="GO" id="GO:0072659">
    <property type="term" value="P:protein localization to plasma membrane"/>
    <property type="evidence" value="ECO:0007669"/>
    <property type="project" value="Ensembl"/>
</dbReference>
<dbReference type="GO" id="GO:0051932">
    <property type="term" value="P:synaptic transmission, GABAergic"/>
    <property type="evidence" value="ECO:0007669"/>
    <property type="project" value="Ensembl"/>
</dbReference>
<dbReference type="FunFam" id="3.80.10.10:FF:000745">
    <property type="entry name" value="Trophoblast glycoprotein"/>
    <property type="match status" value="1"/>
</dbReference>
<dbReference type="Gene3D" id="3.80.10.10">
    <property type="entry name" value="Ribonuclease Inhibitor"/>
    <property type="match status" value="1"/>
</dbReference>
<dbReference type="InterPro" id="IPR000483">
    <property type="entry name" value="Cys-rich_flank_reg_C"/>
</dbReference>
<dbReference type="InterPro" id="IPR001611">
    <property type="entry name" value="Leu-rich_rpt"/>
</dbReference>
<dbReference type="InterPro" id="IPR003591">
    <property type="entry name" value="Leu-rich_rpt_typical-subtyp"/>
</dbReference>
<dbReference type="InterPro" id="IPR032675">
    <property type="entry name" value="LRR_dom_sf"/>
</dbReference>
<dbReference type="InterPro" id="IPR000372">
    <property type="entry name" value="LRRNT"/>
</dbReference>
<dbReference type="InterPro" id="IPR052286">
    <property type="entry name" value="Wnt_signaling_inhibitor"/>
</dbReference>
<dbReference type="PANTHER" id="PTHR24364">
    <property type="entry name" value="LP06937P"/>
    <property type="match status" value="1"/>
</dbReference>
<dbReference type="PANTHER" id="PTHR24364:SF17">
    <property type="entry name" value="TROPHOBLAST GLYCOPROTEIN"/>
    <property type="match status" value="1"/>
</dbReference>
<dbReference type="Pfam" id="PF13855">
    <property type="entry name" value="LRR_8"/>
    <property type="match status" value="2"/>
</dbReference>
<dbReference type="Pfam" id="PF01463">
    <property type="entry name" value="LRRCT"/>
    <property type="match status" value="1"/>
</dbReference>
<dbReference type="Pfam" id="PF01462">
    <property type="entry name" value="LRRNT"/>
    <property type="match status" value="1"/>
</dbReference>
<dbReference type="PRINTS" id="PR00019">
    <property type="entry name" value="LEURICHRPT"/>
</dbReference>
<dbReference type="SMART" id="SM00369">
    <property type="entry name" value="LRR_TYP"/>
    <property type="match status" value="6"/>
</dbReference>
<dbReference type="SMART" id="SM00082">
    <property type="entry name" value="LRRCT"/>
    <property type="match status" value="1"/>
</dbReference>
<dbReference type="SMART" id="SM00013">
    <property type="entry name" value="LRRNT"/>
    <property type="match status" value="1"/>
</dbReference>
<dbReference type="SUPFAM" id="SSF52058">
    <property type="entry name" value="L domain-like"/>
    <property type="match status" value="1"/>
</dbReference>
<dbReference type="PROSITE" id="PS51450">
    <property type="entry name" value="LRR"/>
    <property type="match status" value="5"/>
</dbReference>
<keyword id="KW-0002">3D-structure</keyword>
<keyword id="KW-1003">Cell membrane</keyword>
<keyword id="KW-0903">Direct protein sequencing</keyword>
<keyword id="KW-1015">Disulfide bond</keyword>
<keyword id="KW-0325">Glycoprotein</keyword>
<keyword id="KW-0433">Leucine-rich repeat</keyword>
<keyword id="KW-0472">Membrane</keyword>
<keyword id="KW-0597">Phosphoprotein</keyword>
<keyword id="KW-1267">Proteomics identification</keyword>
<keyword id="KW-1185">Reference proteome</keyword>
<keyword id="KW-0677">Repeat</keyword>
<keyword id="KW-0732">Signal</keyword>
<keyword id="KW-0812">Transmembrane</keyword>
<keyword id="KW-1133">Transmembrane helix</keyword>
<evidence type="ECO:0000250" key="1">
    <source>
        <dbReference type="UniProtKB" id="Q5PQV5"/>
    </source>
</evidence>
<evidence type="ECO:0000255" key="2"/>
<evidence type="ECO:0000269" key="3">
    <source>
    </source>
</evidence>
<evidence type="ECO:0000269" key="4">
    <source>
    </source>
</evidence>
<evidence type="ECO:0000269" key="5">
    <source>
    </source>
</evidence>
<evidence type="ECO:0007829" key="6">
    <source>
        <dbReference type="PDB" id="4CNC"/>
    </source>
</evidence>
<evidence type="ECO:0007829" key="7">
    <source>
        <dbReference type="PDB" id="4CNM"/>
    </source>
</evidence>
<reference key="1">
    <citation type="journal article" date="1994" name="J. Biol. Chem.">
        <title>Isolation of a cDNA encoding 5T4 oncofetal trophoblast glycoprotein: an antigen associated with metastasis contains leucine rich repeats.</title>
        <authorList>
            <person name="Myers K.A."/>
            <person name="Rahi-Saund V."/>
            <person name="Davison M.D."/>
            <person name="Young J.A."/>
            <person name="Cheater A.J."/>
            <person name="Stern P.L."/>
        </authorList>
    </citation>
    <scope>NUCLEOTIDE SEQUENCE [MRNA]</scope>
    <scope>PROTEIN SEQUENCE OF 52-75 AND 199-235</scope>
    <source>
        <tissue>Placenta</tissue>
    </source>
</reference>
<reference key="2">
    <citation type="journal article" date="2004" name="Nat. Genet.">
        <title>Complete sequencing and characterization of 21,243 full-length human cDNAs.</title>
        <authorList>
            <person name="Ota T."/>
            <person name="Suzuki Y."/>
            <person name="Nishikawa T."/>
            <person name="Otsuki T."/>
            <person name="Sugiyama T."/>
            <person name="Irie R."/>
            <person name="Wakamatsu A."/>
            <person name="Hayashi K."/>
            <person name="Sato H."/>
            <person name="Nagai K."/>
            <person name="Kimura K."/>
            <person name="Makita H."/>
            <person name="Sekine M."/>
            <person name="Obayashi M."/>
            <person name="Nishi T."/>
            <person name="Shibahara T."/>
            <person name="Tanaka T."/>
            <person name="Ishii S."/>
            <person name="Yamamoto J."/>
            <person name="Saito K."/>
            <person name="Kawai Y."/>
            <person name="Isono Y."/>
            <person name="Nakamura Y."/>
            <person name="Nagahari K."/>
            <person name="Murakami K."/>
            <person name="Yasuda T."/>
            <person name="Iwayanagi T."/>
            <person name="Wagatsuma M."/>
            <person name="Shiratori A."/>
            <person name="Sudo H."/>
            <person name="Hosoiri T."/>
            <person name="Kaku Y."/>
            <person name="Kodaira H."/>
            <person name="Kondo H."/>
            <person name="Sugawara M."/>
            <person name="Takahashi M."/>
            <person name="Kanda K."/>
            <person name="Yokoi T."/>
            <person name="Furuya T."/>
            <person name="Kikkawa E."/>
            <person name="Omura Y."/>
            <person name="Abe K."/>
            <person name="Kamihara K."/>
            <person name="Katsuta N."/>
            <person name="Sato K."/>
            <person name="Tanikawa M."/>
            <person name="Yamazaki M."/>
            <person name="Ninomiya K."/>
            <person name="Ishibashi T."/>
            <person name="Yamashita H."/>
            <person name="Murakawa K."/>
            <person name="Fujimori K."/>
            <person name="Tanai H."/>
            <person name="Kimata M."/>
            <person name="Watanabe M."/>
            <person name="Hiraoka S."/>
            <person name="Chiba Y."/>
            <person name="Ishida S."/>
            <person name="Ono Y."/>
            <person name="Takiguchi S."/>
            <person name="Watanabe S."/>
            <person name="Yosida M."/>
            <person name="Hotuta T."/>
            <person name="Kusano J."/>
            <person name="Kanehori K."/>
            <person name="Takahashi-Fujii A."/>
            <person name="Hara H."/>
            <person name="Tanase T.-O."/>
            <person name="Nomura Y."/>
            <person name="Togiya S."/>
            <person name="Komai F."/>
            <person name="Hara R."/>
            <person name="Takeuchi K."/>
            <person name="Arita M."/>
            <person name="Imose N."/>
            <person name="Musashino K."/>
            <person name="Yuuki H."/>
            <person name="Oshima A."/>
            <person name="Sasaki N."/>
            <person name="Aotsuka S."/>
            <person name="Yoshikawa Y."/>
            <person name="Matsunawa H."/>
            <person name="Ichihara T."/>
            <person name="Shiohata N."/>
            <person name="Sano S."/>
            <person name="Moriya S."/>
            <person name="Momiyama H."/>
            <person name="Satoh N."/>
            <person name="Takami S."/>
            <person name="Terashima Y."/>
            <person name="Suzuki O."/>
            <person name="Nakagawa S."/>
            <person name="Senoh A."/>
            <person name="Mizoguchi H."/>
            <person name="Goto Y."/>
            <person name="Shimizu F."/>
            <person name="Wakebe H."/>
            <person name="Hishigaki H."/>
            <person name="Watanabe T."/>
            <person name="Sugiyama A."/>
            <person name="Takemoto M."/>
            <person name="Kawakami B."/>
            <person name="Yamazaki M."/>
            <person name="Watanabe K."/>
            <person name="Kumagai A."/>
            <person name="Itakura S."/>
            <person name="Fukuzumi Y."/>
            <person name="Fujimori Y."/>
            <person name="Komiyama M."/>
            <person name="Tashiro H."/>
            <person name="Tanigami A."/>
            <person name="Fujiwara T."/>
            <person name="Ono T."/>
            <person name="Yamada K."/>
            <person name="Fujii Y."/>
            <person name="Ozaki K."/>
            <person name="Hirao M."/>
            <person name="Ohmori Y."/>
            <person name="Kawabata A."/>
            <person name="Hikiji T."/>
            <person name="Kobatake N."/>
            <person name="Inagaki H."/>
            <person name="Ikema Y."/>
            <person name="Okamoto S."/>
            <person name="Okitani R."/>
            <person name="Kawakami T."/>
            <person name="Noguchi S."/>
            <person name="Itoh T."/>
            <person name="Shigeta K."/>
            <person name="Senba T."/>
            <person name="Matsumura K."/>
            <person name="Nakajima Y."/>
            <person name="Mizuno T."/>
            <person name="Morinaga M."/>
            <person name="Sasaki M."/>
            <person name="Togashi T."/>
            <person name="Oyama M."/>
            <person name="Hata H."/>
            <person name="Watanabe M."/>
            <person name="Komatsu T."/>
            <person name="Mizushima-Sugano J."/>
            <person name="Satoh T."/>
            <person name="Shirai Y."/>
            <person name="Takahashi Y."/>
            <person name="Nakagawa K."/>
            <person name="Okumura K."/>
            <person name="Nagase T."/>
            <person name="Nomura N."/>
            <person name="Kikuchi H."/>
            <person name="Masuho Y."/>
            <person name="Yamashita R."/>
            <person name="Nakai K."/>
            <person name="Yada T."/>
            <person name="Nakamura Y."/>
            <person name="Ohara O."/>
            <person name="Isogai T."/>
            <person name="Sugano S."/>
        </authorList>
    </citation>
    <scope>NUCLEOTIDE SEQUENCE [LARGE SCALE MRNA]</scope>
</reference>
<reference key="3">
    <citation type="journal article" date="2005" name="DNA Res.">
        <title>Signal sequence and keyword trap in silico for selection of full-length human cDNAs encoding secretion or membrane proteins from oligo-capped cDNA libraries.</title>
        <authorList>
            <person name="Otsuki T."/>
            <person name="Ota T."/>
            <person name="Nishikawa T."/>
            <person name="Hayashi K."/>
            <person name="Suzuki Y."/>
            <person name="Yamamoto J."/>
            <person name="Wakamatsu A."/>
            <person name="Kimura K."/>
            <person name="Sakamoto K."/>
            <person name="Hatano N."/>
            <person name="Kawai Y."/>
            <person name="Ishii S."/>
            <person name="Saito K."/>
            <person name="Kojima S."/>
            <person name="Sugiyama T."/>
            <person name="Ono T."/>
            <person name="Okano K."/>
            <person name="Yoshikawa Y."/>
            <person name="Aotsuka S."/>
            <person name="Sasaki N."/>
            <person name="Hattori A."/>
            <person name="Okumura K."/>
            <person name="Nagai K."/>
            <person name="Sugano S."/>
            <person name="Isogai T."/>
        </authorList>
    </citation>
    <scope>NUCLEOTIDE SEQUENCE [LARGE SCALE MRNA]</scope>
</reference>
<reference key="4">
    <citation type="journal article" date="2003" name="Nature">
        <title>The DNA sequence and analysis of human chromosome 6.</title>
        <authorList>
            <person name="Mungall A.J."/>
            <person name="Palmer S.A."/>
            <person name="Sims S.K."/>
            <person name="Edwards C.A."/>
            <person name="Ashurst J.L."/>
            <person name="Wilming L."/>
            <person name="Jones M.C."/>
            <person name="Horton R."/>
            <person name="Hunt S.E."/>
            <person name="Scott C.E."/>
            <person name="Gilbert J.G.R."/>
            <person name="Clamp M.E."/>
            <person name="Bethel G."/>
            <person name="Milne S."/>
            <person name="Ainscough R."/>
            <person name="Almeida J.P."/>
            <person name="Ambrose K.D."/>
            <person name="Andrews T.D."/>
            <person name="Ashwell R.I.S."/>
            <person name="Babbage A.K."/>
            <person name="Bagguley C.L."/>
            <person name="Bailey J."/>
            <person name="Banerjee R."/>
            <person name="Barker D.J."/>
            <person name="Barlow K.F."/>
            <person name="Bates K."/>
            <person name="Beare D.M."/>
            <person name="Beasley H."/>
            <person name="Beasley O."/>
            <person name="Bird C.P."/>
            <person name="Blakey S.E."/>
            <person name="Bray-Allen S."/>
            <person name="Brook J."/>
            <person name="Brown A.J."/>
            <person name="Brown J.Y."/>
            <person name="Burford D.C."/>
            <person name="Burrill W."/>
            <person name="Burton J."/>
            <person name="Carder C."/>
            <person name="Carter N.P."/>
            <person name="Chapman J.C."/>
            <person name="Clark S.Y."/>
            <person name="Clark G."/>
            <person name="Clee C.M."/>
            <person name="Clegg S."/>
            <person name="Cobley V."/>
            <person name="Collier R.E."/>
            <person name="Collins J.E."/>
            <person name="Colman L.K."/>
            <person name="Corby N.R."/>
            <person name="Coville G.J."/>
            <person name="Culley K.M."/>
            <person name="Dhami P."/>
            <person name="Davies J."/>
            <person name="Dunn M."/>
            <person name="Earthrowl M.E."/>
            <person name="Ellington A.E."/>
            <person name="Evans K.A."/>
            <person name="Faulkner L."/>
            <person name="Francis M.D."/>
            <person name="Frankish A."/>
            <person name="Frankland J."/>
            <person name="French L."/>
            <person name="Garner P."/>
            <person name="Garnett J."/>
            <person name="Ghori M.J."/>
            <person name="Gilby L.M."/>
            <person name="Gillson C.J."/>
            <person name="Glithero R.J."/>
            <person name="Grafham D.V."/>
            <person name="Grant M."/>
            <person name="Gribble S."/>
            <person name="Griffiths C."/>
            <person name="Griffiths M.N.D."/>
            <person name="Hall R."/>
            <person name="Halls K.S."/>
            <person name="Hammond S."/>
            <person name="Harley J.L."/>
            <person name="Hart E.A."/>
            <person name="Heath P.D."/>
            <person name="Heathcott R."/>
            <person name="Holmes S.J."/>
            <person name="Howden P.J."/>
            <person name="Howe K.L."/>
            <person name="Howell G.R."/>
            <person name="Huckle E."/>
            <person name="Humphray S.J."/>
            <person name="Humphries M.D."/>
            <person name="Hunt A.R."/>
            <person name="Johnson C.M."/>
            <person name="Joy A.A."/>
            <person name="Kay M."/>
            <person name="Keenan S.J."/>
            <person name="Kimberley A.M."/>
            <person name="King A."/>
            <person name="Laird G.K."/>
            <person name="Langford C."/>
            <person name="Lawlor S."/>
            <person name="Leongamornlert D.A."/>
            <person name="Leversha M."/>
            <person name="Lloyd C.R."/>
            <person name="Lloyd D.M."/>
            <person name="Loveland J.E."/>
            <person name="Lovell J."/>
            <person name="Martin S."/>
            <person name="Mashreghi-Mohammadi M."/>
            <person name="Maslen G.L."/>
            <person name="Matthews L."/>
            <person name="McCann O.T."/>
            <person name="McLaren S.J."/>
            <person name="McLay K."/>
            <person name="McMurray A."/>
            <person name="Moore M.J.F."/>
            <person name="Mullikin J.C."/>
            <person name="Niblett D."/>
            <person name="Nickerson T."/>
            <person name="Novik K.L."/>
            <person name="Oliver K."/>
            <person name="Overton-Larty E.K."/>
            <person name="Parker A."/>
            <person name="Patel R."/>
            <person name="Pearce A.V."/>
            <person name="Peck A.I."/>
            <person name="Phillimore B.J.C.T."/>
            <person name="Phillips S."/>
            <person name="Plumb R.W."/>
            <person name="Porter K.M."/>
            <person name="Ramsey Y."/>
            <person name="Ranby S.A."/>
            <person name="Rice C.M."/>
            <person name="Ross M.T."/>
            <person name="Searle S.M."/>
            <person name="Sehra H.K."/>
            <person name="Sheridan E."/>
            <person name="Skuce C.D."/>
            <person name="Smith S."/>
            <person name="Smith M."/>
            <person name="Spraggon L."/>
            <person name="Squares S.L."/>
            <person name="Steward C.A."/>
            <person name="Sycamore N."/>
            <person name="Tamlyn-Hall G."/>
            <person name="Tester J."/>
            <person name="Theaker A.J."/>
            <person name="Thomas D.W."/>
            <person name="Thorpe A."/>
            <person name="Tracey A."/>
            <person name="Tromans A."/>
            <person name="Tubby B."/>
            <person name="Wall M."/>
            <person name="Wallis J.M."/>
            <person name="West A.P."/>
            <person name="White S.S."/>
            <person name="Whitehead S.L."/>
            <person name="Whittaker H."/>
            <person name="Wild A."/>
            <person name="Willey D.J."/>
            <person name="Wilmer T.E."/>
            <person name="Wood J.M."/>
            <person name="Wray P.W."/>
            <person name="Wyatt J.C."/>
            <person name="Young L."/>
            <person name="Younger R.M."/>
            <person name="Bentley D.R."/>
            <person name="Coulson A."/>
            <person name="Durbin R.M."/>
            <person name="Hubbard T."/>
            <person name="Sulston J.E."/>
            <person name="Dunham I."/>
            <person name="Rogers J."/>
            <person name="Beck S."/>
        </authorList>
    </citation>
    <scope>NUCLEOTIDE SEQUENCE [LARGE SCALE GENOMIC DNA]</scope>
</reference>
<reference key="5">
    <citation type="submission" date="2005-09" db="EMBL/GenBank/DDBJ databases">
        <authorList>
            <person name="Mural R.J."/>
            <person name="Istrail S."/>
            <person name="Sutton G."/>
            <person name="Florea L."/>
            <person name="Halpern A.L."/>
            <person name="Mobarry C.M."/>
            <person name="Lippert R."/>
            <person name="Walenz B."/>
            <person name="Shatkay H."/>
            <person name="Dew I."/>
            <person name="Miller J.R."/>
            <person name="Flanigan M.J."/>
            <person name="Edwards N.J."/>
            <person name="Bolanos R."/>
            <person name="Fasulo D."/>
            <person name="Halldorsson B.V."/>
            <person name="Hannenhalli S."/>
            <person name="Turner R."/>
            <person name="Yooseph S."/>
            <person name="Lu F."/>
            <person name="Nusskern D.R."/>
            <person name="Shue B.C."/>
            <person name="Zheng X.H."/>
            <person name="Zhong F."/>
            <person name="Delcher A.L."/>
            <person name="Huson D.H."/>
            <person name="Kravitz S.A."/>
            <person name="Mouchard L."/>
            <person name="Reinert K."/>
            <person name="Remington K.A."/>
            <person name="Clark A.G."/>
            <person name="Waterman M.S."/>
            <person name="Eichler E.E."/>
            <person name="Adams M.D."/>
            <person name="Hunkapiller M.W."/>
            <person name="Myers E.W."/>
            <person name="Venter J.C."/>
        </authorList>
    </citation>
    <scope>NUCLEOTIDE SEQUENCE [LARGE SCALE GENOMIC DNA]</scope>
</reference>
<reference key="6">
    <citation type="journal article" date="2004" name="Genome Res.">
        <title>The status, quality, and expansion of the NIH full-length cDNA project: the Mammalian Gene Collection (MGC).</title>
        <authorList>
            <consortium name="The MGC Project Team"/>
        </authorList>
    </citation>
    <scope>NUCLEOTIDE SEQUENCE [LARGE SCALE MRNA]</scope>
    <source>
        <tissue>Muscle</tissue>
    </source>
</reference>
<reference key="7">
    <citation type="journal article" date="2002" name="Mol. Cancer Ther.">
        <title>Attenuated recombinant vaccinia virus expressing oncofetal antigen (tumor-associated antigen) 5T4 induces active therapy of established tumors.</title>
        <authorList>
            <person name="Mulryan K."/>
            <person name="Ryan M.G."/>
            <person name="Myers K.A."/>
            <person name="Shaw D."/>
            <person name="Wang W."/>
            <person name="Kingsman S.M."/>
            <person name="Stern P.L."/>
            <person name="Carroll M.W."/>
        </authorList>
    </citation>
    <scope>USE IN TUMOR IMMUNOTHERAPHY</scope>
</reference>
<reference key="8">
    <citation type="journal article" date="2009" name="J. Proteome Res.">
        <title>Glycoproteomics analysis of human liver tissue by combination of multiple enzyme digestion and hydrazide chemistry.</title>
        <authorList>
            <person name="Chen R."/>
            <person name="Jiang X."/>
            <person name="Sun D."/>
            <person name="Han G."/>
            <person name="Wang F."/>
            <person name="Ye M."/>
            <person name="Wang L."/>
            <person name="Zou H."/>
        </authorList>
    </citation>
    <scope>GLYCOSYLATION [LARGE SCALE ANALYSIS] AT ASN-124</scope>
    <source>
        <tissue>Liver</tissue>
    </source>
</reference>
<reference key="9">
    <citation type="journal article" date="2011" name="Dev. Cell">
        <title>Waif1/5T4 inhibits Wnt/beta-catenin signaling and activates noncanonical Wnt pathways by modifying LRP6 subcellular localization.</title>
        <authorList>
            <person name="Kagermeier-Schenk B."/>
            <person name="Wehner D."/>
            <person name="Ozhan-Kizil G."/>
            <person name="Yamamoto H."/>
            <person name="Li J."/>
            <person name="Kirchner K."/>
            <person name="Hoffmann C."/>
            <person name="Stern P."/>
            <person name="Kikuchi A."/>
            <person name="Schambony A."/>
            <person name="Weidinger G."/>
        </authorList>
    </citation>
    <scope>FUNCTION</scope>
    <scope>MISCELLANEOUS</scope>
</reference>
<reference key="10">
    <citation type="journal article" date="2014" name="Structure">
        <title>Structural insights into the inhibition of Wnt signaling by cancer antigen 5T4/Wnt-activated inhibitory factor 1.</title>
        <authorList>
            <person name="Zhao Y."/>
            <person name="Malinauskas T."/>
            <person name="Harlos K."/>
            <person name="Jones E.Y."/>
        </authorList>
    </citation>
    <scope>X-RAY CRYSTALLOGRAPHY (1.75 ANGSTROMS) OF 60-345</scope>
    <scope>SUBCELLULAR LOCATION</scope>
    <scope>LRR REPEATS</scope>
    <scope>GLYCOSYLATION</scope>
    <scope>DISULFIDE BONDS</scope>
    <scope>MUTAGENESIS OF LYS-76; PHE-97; ASN-124; ARG-214 AND TYR-325</scope>
</reference>
<comment type="function">
    <text evidence="4">May function as an inhibitor of Wnt/beta-catenin signaling by indirectly interacting with LRP6 and blocking Wnt3a-dependent LRP6 internalization.</text>
</comment>
<comment type="subcellular location">
    <subcellularLocation>
        <location evidence="5">Cell membrane</location>
        <topology evidence="5">Single-pass type I membrane protein</topology>
    </subcellularLocation>
</comment>
<comment type="tissue specificity">
    <text>Expressed by all types of trophoblasts as early as 9 weeks of development. Specific for trophoblastic cells except for amniotic epithelium. In adult tissues, the expression is limited to a few epithelial cell types but is found on a variety of carcinoma.</text>
</comment>
<comment type="domain">
    <text evidence="5">The C-terminus of LRR N-terminal cap (LRRNT) and LRR 1 are essential for the inhibition of the Wnt signaling pathway.</text>
</comment>
<comment type="PTM">
    <text evidence="3 5">Highly glycosylated.</text>
</comment>
<comment type="miscellaneous">
    <text>Antigen 5T4 is overexpressed by a wide spectrum of cancers, including colorectal, ovarian and gastric, but with a limited normal tissue expression. Could be used for tumor immunotherapy.</text>
</comment>
<comment type="miscellaneous">
    <text>Reduction of TPBG levels by siRNA significantly enhanced the beta-catenin/TCF transcription-based reporter pBAR activation in response to Wnt stimulation.</text>
</comment>
<protein>
    <recommendedName>
        <fullName>Trophoblast glycoprotein</fullName>
    </recommendedName>
    <alternativeName>
        <fullName>5T4 oncofetal antigen</fullName>
    </alternativeName>
    <alternativeName>
        <fullName>5T4 oncofetal trophoblast glycoprotein</fullName>
        <shortName>5T4 oncotrophoblast glycoprotein</shortName>
    </alternativeName>
    <alternativeName>
        <fullName>M6P1</fullName>
    </alternativeName>
    <alternativeName>
        <fullName>Wnt-activated inhibitory factor 1</fullName>
        <shortName>WAIF1</shortName>
    </alternativeName>
</protein>